<name>CLE20_ARATH</name>
<accession>Q3EDI6</accession>
<feature type="signal peptide" evidence="2">
    <location>
        <begin position="1"/>
        <end position="29"/>
    </location>
</feature>
<feature type="chain" id="PRO_0000401269" description="CLAVATA3/ESR (CLE)-related protein 20">
    <location>
        <begin position="30"/>
        <end position="83"/>
    </location>
</feature>
<feature type="peptide" id="PRO_0000401270" description="CLE20p" evidence="1">
    <location>
        <begin position="70"/>
        <end position="81"/>
    </location>
</feature>
<reference key="1">
    <citation type="journal article" date="2000" name="Nature">
        <title>Sequence and analysis of chromosome 1 of the plant Arabidopsis thaliana.</title>
        <authorList>
            <person name="Theologis A."/>
            <person name="Ecker J.R."/>
            <person name="Palm C.J."/>
            <person name="Federspiel N.A."/>
            <person name="Kaul S."/>
            <person name="White O."/>
            <person name="Alonso J."/>
            <person name="Altafi H."/>
            <person name="Araujo R."/>
            <person name="Bowman C.L."/>
            <person name="Brooks S.Y."/>
            <person name="Buehler E."/>
            <person name="Chan A."/>
            <person name="Chao Q."/>
            <person name="Chen H."/>
            <person name="Cheuk R.F."/>
            <person name="Chin C.W."/>
            <person name="Chung M.K."/>
            <person name="Conn L."/>
            <person name="Conway A.B."/>
            <person name="Conway A.R."/>
            <person name="Creasy T.H."/>
            <person name="Dewar K."/>
            <person name="Dunn P."/>
            <person name="Etgu P."/>
            <person name="Feldblyum T.V."/>
            <person name="Feng J.-D."/>
            <person name="Fong B."/>
            <person name="Fujii C.Y."/>
            <person name="Gill J.E."/>
            <person name="Goldsmith A.D."/>
            <person name="Haas B."/>
            <person name="Hansen N.F."/>
            <person name="Hughes B."/>
            <person name="Huizar L."/>
            <person name="Hunter J.L."/>
            <person name="Jenkins J."/>
            <person name="Johnson-Hopson C."/>
            <person name="Khan S."/>
            <person name="Khaykin E."/>
            <person name="Kim C.J."/>
            <person name="Koo H.L."/>
            <person name="Kremenetskaia I."/>
            <person name="Kurtz D.B."/>
            <person name="Kwan A."/>
            <person name="Lam B."/>
            <person name="Langin-Hooper S."/>
            <person name="Lee A."/>
            <person name="Lee J.M."/>
            <person name="Lenz C.A."/>
            <person name="Li J.H."/>
            <person name="Li Y.-P."/>
            <person name="Lin X."/>
            <person name="Liu S.X."/>
            <person name="Liu Z.A."/>
            <person name="Luros J.S."/>
            <person name="Maiti R."/>
            <person name="Marziali A."/>
            <person name="Militscher J."/>
            <person name="Miranda M."/>
            <person name="Nguyen M."/>
            <person name="Nierman W.C."/>
            <person name="Osborne B.I."/>
            <person name="Pai G."/>
            <person name="Peterson J."/>
            <person name="Pham P.K."/>
            <person name="Rizzo M."/>
            <person name="Rooney T."/>
            <person name="Rowley D."/>
            <person name="Sakano H."/>
            <person name="Salzberg S.L."/>
            <person name="Schwartz J.R."/>
            <person name="Shinn P."/>
            <person name="Southwick A.M."/>
            <person name="Sun H."/>
            <person name="Tallon L.J."/>
            <person name="Tambunga G."/>
            <person name="Toriumi M.J."/>
            <person name="Town C.D."/>
            <person name="Utterback T."/>
            <person name="Van Aken S."/>
            <person name="Vaysberg M."/>
            <person name="Vysotskaia V.S."/>
            <person name="Walker M."/>
            <person name="Wu D."/>
            <person name="Yu G."/>
            <person name="Fraser C.M."/>
            <person name="Venter J.C."/>
            <person name="Davis R.W."/>
        </authorList>
    </citation>
    <scope>NUCLEOTIDE SEQUENCE [LARGE SCALE GENOMIC DNA]</scope>
    <source>
        <strain>cv. Columbia</strain>
    </source>
</reference>
<reference key="2">
    <citation type="journal article" date="2017" name="Plant J.">
        <title>Araport11: a complete reannotation of the Arabidopsis thaliana reference genome.</title>
        <authorList>
            <person name="Cheng C.Y."/>
            <person name="Krishnakumar V."/>
            <person name="Chan A.P."/>
            <person name="Thibaud-Nissen F."/>
            <person name="Schobel S."/>
            <person name="Town C.D."/>
        </authorList>
    </citation>
    <scope>GENOME REANNOTATION</scope>
    <source>
        <strain>cv. Columbia</strain>
    </source>
</reference>
<reference key="3">
    <citation type="journal article" date="2001" name="Plant Physiol.">
        <title>A large family of genes that share homology with CLAVATA3.</title>
        <authorList>
            <person name="Cock J.M."/>
            <person name="McCormick S."/>
        </authorList>
    </citation>
    <scope>GENE FAMILY</scope>
    <scope>NOMENCLATURE</scope>
</reference>
<reference key="4">
    <citation type="journal article" date="2003" name="Plant Mol. Biol.">
        <title>The Arabidopsis CLV3-like (CLE) genes are expressed in diverse tissues and encode secreted proteins.</title>
        <authorList>
            <person name="Sharma V.K."/>
            <person name="Ramirez J."/>
            <person name="Fletcher J.C."/>
        </authorList>
    </citation>
    <scope>TISSUE SPECIFICITY</scope>
</reference>
<reference key="5">
    <citation type="journal article" date="2006" name="Plant Physiol.">
        <title>Gain-of-function phenotypes of many CLAVATA3/ESR genes, including four new family members, correlate with tandem variations in the conserved CLAVATA3/ESR domain.</title>
        <authorList>
            <person name="Strabala T.J."/>
            <person name="O'donnell P.J."/>
            <person name="Smit A.-M."/>
            <person name="Ampomah-Dwamena C."/>
            <person name="Martin E.J."/>
            <person name="Netzler N."/>
            <person name="Nieuwenhuizen N.J."/>
            <person name="Quinn B.D."/>
            <person name="Foote H.C.C."/>
            <person name="Hudson K.R."/>
        </authorList>
    </citation>
    <scope>GENE FAMILY</scope>
</reference>
<reference key="6">
    <citation type="journal article" date="2006" name="Science">
        <title>Dodeca-CLE peptides as suppressors of plant stem cell differentiation.</title>
        <authorList>
            <person name="Ito Y."/>
            <person name="Nakanomyo I."/>
            <person name="Motose H."/>
            <person name="Iwamoto K."/>
            <person name="Sawa S."/>
            <person name="Dohmae N."/>
            <person name="Fukuda H."/>
        </authorList>
    </citation>
    <scope>FUNCTION</scope>
</reference>
<reference key="7">
    <citation type="journal article" date="2008" name="Cell. Mol. Life Sci.">
        <title>The CLE family of plant polypeptide signaling molecules.</title>
        <authorList>
            <person name="Jun J.H."/>
            <person name="Fiume E."/>
            <person name="Fletcher J.C."/>
        </authorList>
    </citation>
    <scope>REVIEW</scope>
</reference>
<reference key="8">
    <citation type="journal article" date="2008" name="Curr. Opin. Plant Biol.">
        <title>Diverse and conserved roles of CLE peptides.</title>
        <authorList>
            <person name="Mitchum M.G."/>
            <person name="Wang X."/>
            <person name="Davis E.L."/>
        </authorList>
    </citation>
    <scope>REVIEW</scope>
</reference>
<reference key="9">
    <citation type="journal article" date="2010" name="Planta">
        <title>CLE14/CLE20 peptides may interact with CLAVATA2/CORYNE receptor-like kinases to irreversibly inhibit cell division in the root meristem of Arabidopsis.</title>
        <authorList>
            <person name="Meng L."/>
            <person name="Feldman L.J."/>
        </authorList>
    </citation>
    <scope>DEVELOPMENTAL STAGE</scope>
    <scope>FUNCTION</scope>
</reference>
<reference key="10">
    <citation type="journal article" date="2010" name="Protoplasma">
        <title>CLE peptide signaling during plant development.</title>
        <authorList>
            <person name="Wang G."/>
            <person name="Fiers M."/>
        </authorList>
    </citation>
    <scope>REVIEW</scope>
</reference>
<reference key="11">
    <citation type="journal article" date="2017" name="EMBO Rep.">
        <title>Perception of root-active CLE peptides requires CORYNE function in the phloem vasculature.</title>
        <authorList>
            <person name="Hazak O."/>
            <person name="Brandt B."/>
            <person name="Cattaneo P."/>
            <person name="Santiago J."/>
            <person name="Rodriguez-Villalon A."/>
            <person name="Hothorn M."/>
            <person name="Hardtke C.S."/>
        </authorList>
    </citation>
    <scope>FUNCTION</scope>
    <source>
        <strain>cv. Columbia</strain>
    </source>
</reference>
<organism>
    <name type="scientific">Arabidopsis thaliana</name>
    <name type="common">Mouse-ear cress</name>
    <dbReference type="NCBI Taxonomy" id="3702"/>
    <lineage>
        <taxon>Eukaryota</taxon>
        <taxon>Viridiplantae</taxon>
        <taxon>Streptophyta</taxon>
        <taxon>Embryophyta</taxon>
        <taxon>Tracheophyta</taxon>
        <taxon>Spermatophyta</taxon>
        <taxon>Magnoliopsida</taxon>
        <taxon>eudicotyledons</taxon>
        <taxon>Gunneridae</taxon>
        <taxon>Pentapetalae</taxon>
        <taxon>rosids</taxon>
        <taxon>malvids</taxon>
        <taxon>Brassicales</taxon>
        <taxon>Brassicaceae</taxon>
        <taxon>Camelineae</taxon>
        <taxon>Arabidopsis</taxon>
    </lineage>
</organism>
<keyword id="KW-0217">Developmental protein</keyword>
<keyword id="KW-0221">Differentiation</keyword>
<keyword id="KW-1185">Reference proteome</keyword>
<keyword id="KW-0964">Secreted</keyword>
<keyword id="KW-0732">Signal</keyword>
<sequence length="83" mass="9538">MKNKNMNPSRPRLLCLIVFLFLVIVLSKASRIHVERRRFSSKPSGENREFLPSQPTFPVVDAGEILPDKRKVKTGSNPLHNKR</sequence>
<dbReference type="EMBL" id="AC005322">
    <property type="status" value="NOT_ANNOTATED_CDS"/>
    <property type="molecule type" value="Genomic_DNA"/>
</dbReference>
<dbReference type="EMBL" id="CP002684">
    <property type="protein sequence ID" value="AEE27786.1"/>
    <property type="molecule type" value="Genomic_DNA"/>
</dbReference>
<dbReference type="RefSeq" id="NP_001318924.1">
    <property type="nucleotide sequence ID" value="NM_001331517.1"/>
</dbReference>
<dbReference type="SMR" id="Q3EDI6"/>
<dbReference type="STRING" id="3702.Q3EDI6"/>
<dbReference type="PaxDb" id="3702-AT1G05065.1"/>
<dbReference type="EnsemblPlants" id="AT1G05065.1">
    <property type="protein sequence ID" value="AT1G05065.1"/>
    <property type="gene ID" value="AT1G05065"/>
</dbReference>
<dbReference type="GeneID" id="28716239"/>
<dbReference type="Gramene" id="AT1G05065.1">
    <property type="protein sequence ID" value="AT1G05065.1"/>
    <property type="gene ID" value="AT1G05065"/>
</dbReference>
<dbReference type="KEGG" id="ath:AT1G05065"/>
<dbReference type="Araport" id="AT1G05065"/>
<dbReference type="TAIR" id="AT1G05065">
    <property type="gene designation" value="CLE20"/>
</dbReference>
<dbReference type="HOGENOM" id="CLU_199297_0_0_1"/>
<dbReference type="InParanoid" id="Q3EDI6"/>
<dbReference type="OMA" id="FIPSQHT"/>
<dbReference type="OrthoDB" id="1103541at2759"/>
<dbReference type="PhylomeDB" id="Q3EDI6"/>
<dbReference type="PRO" id="PR:Q3EDI6"/>
<dbReference type="Proteomes" id="UP000006548">
    <property type="component" value="Chromosome 1"/>
</dbReference>
<dbReference type="ExpressionAtlas" id="Q3EDI6">
    <property type="expression patterns" value="baseline and differential"/>
</dbReference>
<dbReference type="GO" id="GO:0048046">
    <property type="term" value="C:apoplast"/>
    <property type="evidence" value="ECO:0000250"/>
    <property type="project" value="UniProtKB"/>
</dbReference>
<dbReference type="GO" id="GO:0033612">
    <property type="term" value="F:receptor serine/threonine kinase binding"/>
    <property type="evidence" value="ECO:0000250"/>
    <property type="project" value="UniProtKB"/>
</dbReference>
<dbReference type="GO" id="GO:0045168">
    <property type="term" value="P:cell-cell signaling involved in cell fate commitment"/>
    <property type="evidence" value="ECO:0000250"/>
    <property type="project" value="UniProtKB"/>
</dbReference>
<dbReference type="GO" id="GO:0010078">
    <property type="term" value="P:maintenance of root meristem identity"/>
    <property type="evidence" value="ECO:0000314"/>
    <property type="project" value="UniProtKB"/>
</dbReference>
<dbReference type="GO" id="GO:0010088">
    <property type="term" value="P:phloem development"/>
    <property type="evidence" value="ECO:0000314"/>
    <property type="project" value="UniProtKB"/>
</dbReference>
<dbReference type="GO" id="GO:0045595">
    <property type="term" value="P:regulation of cell differentiation"/>
    <property type="evidence" value="ECO:0000314"/>
    <property type="project" value="UniProtKB"/>
</dbReference>
<gene>
    <name evidence="7" type="primary">CLE20</name>
    <name evidence="9" type="ordered locus">At1g05065</name>
    <name evidence="10" type="ORF">T7A14</name>
</gene>
<protein>
    <recommendedName>
        <fullName evidence="7">CLAVATA3/ESR (CLE)-related protein 20</fullName>
    </recommendedName>
    <component>
        <recommendedName>
            <fullName evidence="7">CLE20p</fullName>
        </recommendedName>
    </component>
</protein>
<comment type="function">
    <molecule>CLE20p</molecule>
    <text evidence="4 5 6">Extracellular signal peptide that regulates cell fate. Represses root apical meristem maintenance. Inhibits irreversibly root growth by reducing cell division rates in the root apical meristem (PubMed:20697738). Regulates the transition of protophloem cells from proliferation to differentiation, thus impinging on postembryonic growth capacity of the root meristem; this signaling pathway requires CRN and CLV2 (PubMed:28607033).</text>
</comment>
<comment type="subcellular location">
    <molecule>CLE20p</molecule>
    <subcellularLocation>
        <location evidence="1">Secreted</location>
        <location evidence="1">Extracellular space</location>
    </subcellularLocation>
</comment>
<comment type="tissue specificity">
    <molecule>CLE20p</molecule>
    <text evidence="3">Mostly expressed in roots, seedlings, leaves, flowers, stems and apex, and, to a lower extent, in siliques and pollen.</text>
</comment>
<comment type="developmental stage">
    <molecule>CLE20p</molecule>
    <text evidence="5">Expressed specifically in differentiating cells of the root.</text>
</comment>
<comment type="similarity">
    <text evidence="8">Belongs to the CLV3/ESR signal peptide family.</text>
</comment>
<proteinExistence type="evidence at transcript level"/>
<evidence type="ECO:0000250" key="1">
    <source>
        <dbReference type="UniProtKB" id="O49519"/>
    </source>
</evidence>
<evidence type="ECO:0000255" key="2"/>
<evidence type="ECO:0000269" key="3">
    <source>
    </source>
</evidence>
<evidence type="ECO:0000269" key="4">
    <source>
    </source>
</evidence>
<evidence type="ECO:0000269" key="5">
    <source>
    </source>
</evidence>
<evidence type="ECO:0000269" key="6">
    <source>
    </source>
</evidence>
<evidence type="ECO:0000303" key="7">
    <source>
    </source>
</evidence>
<evidence type="ECO:0000305" key="8"/>
<evidence type="ECO:0000312" key="9">
    <source>
        <dbReference type="Araport" id="AT1G05065"/>
    </source>
</evidence>
<evidence type="ECO:0000312" key="10">
    <source>
        <dbReference type="EMBL" id="AC005322"/>
    </source>
</evidence>